<accession>Q6GI81</accession>
<sequence length="115" mass="13529">MRLYINEIKIKDDILYCYTEDSIKGLSEVGQMLVDSDNYAFAYTLDDGKAYAYLIFVQETWTMLHENMTKKIIINDELELTEFHQELTYILDNIKGNNNYGKEFVATVEETFDIE</sequence>
<protein>
    <recommendedName>
        <fullName evidence="1">UPF0738 protein SAR0972</fullName>
    </recommendedName>
</protein>
<evidence type="ECO:0000255" key="1">
    <source>
        <dbReference type="HAMAP-Rule" id="MF_01861"/>
    </source>
</evidence>
<comment type="similarity">
    <text evidence="1">Belongs to the UPF0738 family.</text>
</comment>
<feature type="chain" id="PRO_0000369661" description="UPF0738 protein SAR0972">
    <location>
        <begin position="1"/>
        <end position="115"/>
    </location>
</feature>
<organism>
    <name type="scientific">Staphylococcus aureus (strain MRSA252)</name>
    <dbReference type="NCBI Taxonomy" id="282458"/>
    <lineage>
        <taxon>Bacteria</taxon>
        <taxon>Bacillati</taxon>
        <taxon>Bacillota</taxon>
        <taxon>Bacilli</taxon>
        <taxon>Bacillales</taxon>
        <taxon>Staphylococcaceae</taxon>
        <taxon>Staphylococcus</taxon>
    </lineage>
</organism>
<gene>
    <name type="ordered locus">SAR0972</name>
</gene>
<dbReference type="EMBL" id="BX571856">
    <property type="protein sequence ID" value="CAG39977.1"/>
    <property type="molecule type" value="Genomic_DNA"/>
</dbReference>
<dbReference type="RefSeq" id="WP_001242102.1">
    <property type="nucleotide sequence ID" value="NC_002952.2"/>
</dbReference>
<dbReference type="KEGG" id="sar:SAR0972"/>
<dbReference type="HOGENOM" id="CLU_142282_0_0_9"/>
<dbReference type="Proteomes" id="UP000000596">
    <property type="component" value="Chromosome"/>
</dbReference>
<dbReference type="HAMAP" id="MF_01861">
    <property type="entry name" value="UPF0738"/>
    <property type="match status" value="1"/>
</dbReference>
<dbReference type="InterPro" id="IPR020908">
    <property type="entry name" value="UPF0738"/>
</dbReference>
<dbReference type="Pfam" id="PF19785">
    <property type="entry name" value="UPF0738"/>
    <property type="match status" value="1"/>
</dbReference>
<proteinExistence type="inferred from homology"/>
<reference key="1">
    <citation type="journal article" date="2004" name="Proc. Natl. Acad. Sci. U.S.A.">
        <title>Complete genomes of two clinical Staphylococcus aureus strains: evidence for the rapid evolution of virulence and drug resistance.</title>
        <authorList>
            <person name="Holden M.T.G."/>
            <person name="Feil E.J."/>
            <person name="Lindsay J.A."/>
            <person name="Peacock S.J."/>
            <person name="Day N.P.J."/>
            <person name="Enright M.C."/>
            <person name="Foster T.J."/>
            <person name="Moore C.E."/>
            <person name="Hurst L."/>
            <person name="Atkin R."/>
            <person name="Barron A."/>
            <person name="Bason N."/>
            <person name="Bentley S.D."/>
            <person name="Chillingworth C."/>
            <person name="Chillingworth T."/>
            <person name="Churcher C."/>
            <person name="Clark L."/>
            <person name="Corton C."/>
            <person name="Cronin A."/>
            <person name="Doggett J."/>
            <person name="Dowd L."/>
            <person name="Feltwell T."/>
            <person name="Hance Z."/>
            <person name="Harris B."/>
            <person name="Hauser H."/>
            <person name="Holroyd S."/>
            <person name="Jagels K."/>
            <person name="James K.D."/>
            <person name="Lennard N."/>
            <person name="Line A."/>
            <person name="Mayes R."/>
            <person name="Moule S."/>
            <person name="Mungall K."/>
            <person name="Ormond D."/>
            <person name="Quail M.A."/>
            <person name="Rabbinowitsch E."/>
            <person name="Rutherford K.M."/>
            <person name="Sanders M."/>
            <person name="Sharp S."/>
            <person name="Simmonds M."/>
            <person name="Stevens K."/>
            <person name="Whitehead S."/>
            <person name="Barrell B.G."/>
            <person name="Spratt B.G."/>
            <person name="Parkhill J."/>
        </authorList>
    </citation>
    <scope>NUCLEOTIDE SEQUENCE [LARGE SCALE GENOMIC DNA]</scope>
    <source>
        <strain>MRSA252</strain>
    </source>
</reference>
<name>Y972_STAAR</name>